<sequence>MAVGKNKRVSKGKKGGKKKIVDPFLKKEWYTLKAPVMFHVRNFGQTLVSKTQGTKLATDGLRGRIYEVSLADLNADEDQSYRKIKLCCEDIQGRNCLTNFHGTSVTRDKLCSLIRKNYSLIEAFTDVKTTDGYTLRMFCIGYTKRRPGQLKSTCYIRSSRTRVVRRKMIEVMQREASTTSMREVVKKIIPESIGKEIEKACKSVFPLQNVLIRKIKVLKKPKFDLTKLMEVHTDISEETGHATKVEESEEAANLLTKELDAQEA</sequence>
<evidence type="ECO:0000255" key="1">
    <source>
        <dbReference type="HAMAP-Rule" id="MF_03122"/>
    </source>
</evidence>
<evidence type="ECO:0000305" key="2"/>
<dbReference type="EMBL" id="AAXT02000004">
    <property type="protein sequence ID" value="EDO07715.1"/>
    <property type="molecule type" value="Genomic_DNA"/>
</dbReference>
<dbReference type="RefSeq" id="XP_001611283.1">
    <property type="nucleotide sequence ID" value="XM_001611233.1"/>
</dbReference>
<dbReference type="SMR" id="A7AMD1"/>
<dbReference type="FunCoup" id="A7AMD1">
    <property type="interactions" value="365"/>
</dbReference>
<dbReference type="STRING" id="5865.A7AMD1"/>
<dbReference type="EnsemblProtists" id="EDO07715">
    <property type="protein sequence ID" value="EDO07715"/>
    <property type="gene ID" value="BBOV_III001480"/>
</dbReference>
<dbReference type="GeneID" id="5479528"/>
<dbReference type="KEGG" id="bbo:BBOV_III001480"/>
<dbReference type="VEuPathDB" id="PiroplasmaDB:BBOV_III001480"/>
<dbReference type="eggNOG" id="KOG1628">
    <property type="taxonomic scope" value="Eukaryota"/>
</dbReference>
<dbReference type="InParanoid" id="A7AMD1"/>
<dbReference type="OMA" id="TRFKGHE"/>
<dbReference type="Proteomes" id="UP000002173">
    <property type="component" value="Unassembled WGS sequence"/>
</dbReference>
<dbReference type="GO" id="GO:0022627">
    <property type="term" value="C:cytosolic small ribosomal subunit"/>
    <property type="evidence" value="ECO:0007669"/>
    <property type="project" value="UniProtKB-UniRule"/>
</dbReference>
<dbReference type="GO" id="GO:0003735">
    <property type="term" value="F:structural constituent of ribosome"/>
    <property type="evidence" value="ECO:0007669"/>
    <property type="project" value="UniProtKB-UniRule"/>
</dbReference>
<dbReference type="GO" id="GO:0006412">
    <property type="term" value="P:translation"/>
    <property type="evidence" value="ECO:0007669"/>
    <property type="project" value="UniProtKB-UniRule"/>
</dbReference>
<dbReference type="HAMAP" id="MF_03122">
    <property type="entry name" value="Ribosomal_eS1_euk"/>
    <property type="match status" value="1"/>
</dbReference>
<dbReference type="InterPro" id="IPR001593">
    <property type="entry name" value="Ribosomal_eS1"/>
</dbReference>
<dbReference type="InterPro" id="IPR018281">
    <property type="entry name" value="Ribosomal_eS1_CS"/>
</dbReference>
<dbReference type="InterPro" id="IPR027500">
    <property type="entry name" value="Ribosomal_eS1_euk"/>
</dbReference>
<dbReference type="PANTHER" id="PTHR11830">
    <property type="entry name" value="40S RIBOSOMAL PROTEIN S3A"/>
    <property type="match status" value="1"/>
</dbReference>
<dbReference type="Pfam" id="PF01015">
    <property type="entry name" value="Ribosomal_S3Ae"/>
    <property type="match status" value="1"/>
</dbReference>
<dbReference type="SMART" id="SM01397">
    <property type="entry name" value="Ribosomal_S3Ae"/>
    <property type="match status" value="1"/>
</dbReference>
<dbReference type="PROSITE" id="PS01191">
    <property type="entry name" value="RIBOSOMAL_S3AE"/>
    <property type="match status" value="1"/>
</dbReference>
<protein>
    <recommendedName>
        <fullName evidence="1">Small ribosomal subunit protein eS1</fullName>
    </recommendedName>
    <alternativeName>
        <fullName evidence="2">40S ribosomal protein S3a</fullName>
    </alternativeName>
</protein>
<reference key="1">
    <citation type="journal article" date="2007" name="PLoS Pathog.">
        <title>Genome sequence of Babesia bovis and comparative analysis of apicomplexan hemoprotozoa.</title>
        <authorList>
            <person name="Brayton K.A."/>
            <person name="Lau A.O.T."/>
            <person name="Herndon D.R."/>
            <person name="Hannick L."/>
            <person name="Kappmeyer L.S."/>
            <person name="Berens S.J."/>
            <person name="Bidwell S.L."/>
            <person name="Brown W.C."/>
            <person name="Crabtree J."/>
            <person name="Fadrosh D."/>
            <person name="Feldblum T."/>
            <person name="Forberger H.A."/>
            <person name="Haas B.J."/>
            <person name="Howell J.M."/>
            <person name="Khouri H."/>
            <person name="Koo H."/>
            <person name="Mann D.J."/>
            <person name="Norimine J."/>
            <person name="Paulsen I.T."/>
            <person name="Radune D."/>
            <person name="Ren Q."/>
            <person name="Smith R.K. Jr."/>
            <person name="Suarez C.E."/>
            <person name="White O."/>
            <person name="Wortman J.R."/>
            <person name="Knowles D.P. Jr."/>
            <person name="McElwain T.F."/>
            <person name="Nene V.M."/>
        </authorList>
    </citation>
    <scope>NUCLEOTIDE SEQUENCE [LARGE SCALE GENOMIC DNA]</scope>
    <source>
        <strain>T2Bo</strain>
    </source>
</reference>
<proteinExistence type="inferred from homology"/>
<accession>A7AMD1</accession>
<name>RS3A_BABBO</name>
<keyword id="KW-0963">Cytoplasm</keyword>
<keyword id="KW-1185">Reference proteome</keyword>
<keyword id="KW-0687">Ribonucleoprotein</keyword>
<keyword id="KW-0689">Ribosomal protein</keyword>
<gene>
    <name type="ORF">BBOV_III001480</name>
</gene>
<feature type="initiator methionine" description="Removed" evidence="1">
    <location>
        <position position="1"/>
    </location>
</feature>
<feature type="chain" id="PRO_0000389334" description="Small ribosomal subunit protein eS1">
    <location>
        <begin position="2"/>
        <end position="264"/>
    </location>
</feature>
<organism>
    <name type="scientific">Babesia bovis</name>
    <dbReference type="NCBI Taxonomy" id="5865"/>
    <lineage>
        <taxon>Eukaryota</taxon>
        <taxon>Sar</taxon>
        <taxon>Alveolata</taxon>
        <taxon>Apicomplexa</taxon>
        <taxon>Aconoidasida</taxon>
        <taxon>Piroplasmida</taxon>
        <taxon>Babesiidae</taxon>
        <taxon>Babesia</taxon>
    </lineage>
</organism>
<comment type="subunit">
    <text evidence="1">Component of the small ribosomal subunit. Mature ribosomes consist of a small (40S) and a large (60S) subunit. The 40S subunit contains about 33 different proteins and 1 molecule of RNA (18S). The 60S subunit contains about 49 different proteins and 3 molecules of RNA (25S, 5.8S and 5S).</text>
</comment>
<comment type="subcellular location">
    <subcellularLocation>
        <location evidence="1">Cytoplasm</location>
    </subcellularLocation>
</comment>
<comment type="similarity">
    <text evidence="1">Belongs to the eukaryotic ribosomal protein eS1 family.</text>
</comment>